<reference key="1">
    <citation type="journal article" date="2004" name="Nat. Genet.">
        <title>Evidence in the Legionella pneumophila genome for exploitation of host cell functions and high genome plasticity.</title>
        <authorList>
            <person name="Cazalet C."/>
            <person name="Rusniok C."/>
            <person name="Brueggemann H."/>
            <person name="Zidane N."/>
            <person name="Magnier A."/>
            <person name="Ma L."/>
            <person name="Tichit M."/>
            <person name="Jarraud S."/>
            <person name="Bouchier C."/>
            <person name="Vandenesch F."/>
            <person name="Kunst F."/>
            <person name="Etienne J."/>
            <person name="Glaser P."/>
            <person name="Buchrieser C."/>
        </authorList>
    </citation>
    <scope>NUCLEOTIDE SEQUENCE [LARGE SCALE GENOMIC DNA]</scope>
    <source>
        <strain>Lens</strain>
    </source>
</reference>
<comment type="function">
    <text evidence="1">A key translational regulator that binds mRNA to regulate translation initiation and/or mRNA stability. Mediates global changes in gene expression, shifting from rapid growth to stress survival by linking envelope stress, the stringent response and the catabolite repression systems. Usually binds in the 5'-UTR; binding at or near the Shine-Dalgarno sequence prevents ribosome-binding, repressing translation, binding elsewhere in the 5'-UTR can activate translation and/or stabilize the mRNA. Its function is antagonized by small RNA(s).</text>
</comment>
<comment type="subunit">
    <text evidence="1">Homodimer; the beta-strands of each monomer intercalate to form a hydrophobic core, while the alpha-helices form wings that extend away from the core.</text>
</comment>
<comment type="subcellular location">
    <subcellularLocation>
        <location evidence="1">Cytoplasm</location>
    </subcellularLocation>
</comment>
<comment type="similarity">
    <text evidence="1">Belongs to the CsrA/RsmA family.</text>
</comment>
<gene>
    <name evidence="1" type="primary">csrA</name>
    <name type="ordered locus">lpl0820</name>
</gene>
<organism>
    <name type="scientific">Legionella pneumophila (strain Lens)</name>
    <dbReference type="NCBI Taxonomy" id="297245"/>
    <lineage>
        <taxon>Bacteria</taxon>
        <taxon>Pseudomonadati</taxon>
        <taxon>Pseudomonadota</taxon>
        <taxon>Gammaproteobacteria</taxon>
        <taxon>Legionellales</taxon>
        <taxon>Legionellaceae</taxon>
        <taxon>Legionella</taxon>
    </lineage>
</organism>
<name>CSRA_LEGPL</name>
<dbReference type="EMBL" id="CR628337">
    <property type="protein sequence ID" value="CAH15054.1"/>
    <property type="molecule type" value="Genomic_DNA"/>
</dbReference>
<dbReference type="RefSeq" id="WP_011213314.1">
    <property type="nucleotide sequence ID" value="NC_006369.1"/>
</dbReference>
<dbReference type="SMR" id="Q5WYB9"/>
<dbReference type="GeneID" id="57034771"/>
<dbReference type="KEGG" id="lpf:lpl0820"/>
<dbReference type="LegioList" id="lpl0820"/>
<dbReference type="HOGENOM" id="CLU_164837_2_1_6"/>
<dbReference type="Proteomes" id="UP000002517">
    <property type="component" value="Chromosome"/>
</dbReference>
<dbReference type="GO" id="GO:0005829">
    <property type="term" value="C:cytosol"/>
    <property type="evidence" value="ECO:0007669"/>
    <property type="project" value="TreeGrafter"/>
</dbReference>
<dbReference type="GO" id="GO:0048027">
    <property type="term" value="F:mRNA 5'-UTR binding"/>
    <property type="evidence" value="ECO:0007669"/>
    <property type="project" value="UniProtKB-UniRule"/>
</dbReference>
<dbReference type="GO" id="GO:0006402">
    <property type="term" value="P:mRNA catabolic process"/>
    <property type="evidence" value="ECO:0007669"/>
    <property type="project" value="InterPro"/>
</dbReference>
<dbReference type="GO" id="GO:0045947">
    <property type="term" value="P:negative regulation of translational initiation"/>
    <property type="evidence" value="ECO:0007669"/>
    <property type="project" value="UniProtKB-UniRule"/>
</dbReference>
<dbReference type="GO" id="GO:0045948">
    <property type="term" value="P:positive regulation of translational initiation"/>
    <property type="evidence" value="ECO:0007669"/>
    <property type="project" value="UniProtKB-UniRule"/>
</dbReference>
<dbReference type="GO" id="GO:0006109">
    <property type="term" value="P:regulation of carbohydrate metabolic process"/>
    <property type="evidence" value="ECO:0007669"/>
    <property type="project" value="UniProtKB-UniRule"/>
</dbReference>
<dbReference type="FunFam" id="2.60.40.4380:FF:000001">
    <property type="entry name" value="Translational regulator CsrA"/>
    <property type="match status" value="1"/>
</dbReference>
<dbReference type="Gene3D" id="2.60.40.4380">
    <property type="entry name" value="Translational regulator CsrA"/>
    <property type="match status" value="1"/>
</dbReference>
<dbReference type="HAMAP" id="MF_00167">
    <property type="entry name" value="CsrA"/>
    <property type="match status" value="1"/>
</dbReference>
<dbReference type="InterPro" id="IPR003751">
    <property type="entry name" value="CsrA"/>
</dbReference>
<dbReference type="InterPro" id="IPR036107">
    <property type="entry name" value="CsrA_sf"/>
</dbReference>
<dbReference type="NCBIfam" id="TIGR00202">
    <property type="entry name" value="csrA"/>
    <property type="match status" value="1"/>
</dbReference>
<dbReference type="NCBIfam" id="NF002469">
    <property type="entry name" value="PRK01712.1"/>
    <property type="match status" value="1"/>
</dbReference>
<dbReference type="PANTHER" id="PTHR34984">
    <property type="entry name" value="CARBON STORAGE REGULATOR"/>
    <property type="match status" value="1"/>
</dbReference>
<dbReference type="PANTHER" id="PTHR34984:SF1">
    <property type="entry name" value="CARBON STORAGE REGULATOR"/>
    <property type="match status" value="1"/>
</dbReference>
<dbReference type="Pfam" id="PF02599">
    <property type="entry name" value="CsrA"/>
    <property type="match status" value="1"/>
</dbReference>
<dbReference type="SUPFAM" id="SSF117130">
    <property type="entry name" value="CsrA-like"/>
    <property type="match status" value="1"/>
</dbReference>
<protein>
    <recommendedName>
        <fullName evidence="1">Translational regulator CsrA</fullName>
    </recommendedName>
    <alternativeName>
        <fullName evidence="1">Carbon storage regulator</fullName>
    </alternativeName>
</protein>
<proteinExistence type="inferred from homology"/>
<sequence length="64" mass="7187">MLILTRRIGETLIIGDDVNITVLGVKGNQVRLGINAPKDVSVHREEIYLRIQQEKESDDSEQAV</sequence>
<evidence type="ECO:0000255" key="1">
    <source>
        <dbReference type="HAMAP-Rule" id="MF_00167"/>
    </source>
</evidence>
<accession>Q5WYB9</accession>
<keyword id="KW-0010">Activator</keyword>
<keyword id="KW-0963">Cytoplasm</keyword>
<keyword id="KW-0678">Repressor</keyword>
<keyword id="KW-0694">RNA-binding</keyword>
<keyword id="KW-0810">Translation regulation</keyword>
<feature type="chain" id="PRO_1000023395" description="Translational regulator CsrA">
    <location>
        <begin position="1"/>
        <end position="64"/>
    </location>
</feature>